<dbReference type="EMBL" id="AAFI02000008">
    <property type="protein sequence ID" value="EAL71215.1"/>
    <property type="molecule type" value="Genomic_DNA"/>
</dbReference>
<dbReference type="RefSeq" id="XP_645167.1">
    <property type="nucleotide sequence ID" value="XM_640075.1"/>
</dbReference>
<dbReference type="SMR" id="Q86JE4"/>
<dbReference type="FunCoup" id="Q86JE4">
    <property type="interactions" value="744"/>
</dbReference>
<dbReference type="PaxDb" id="44689-DDB0168687"/>
<dbReference type="EnsemblProtists" id="EAL71215">
    <property type="protein sequence ID" value="EAL71215"/>
    <property type="gene ID" value="DDB_G0272126"/>
</dbReference>
<dbReference type="GeneID" id="8618339"/>
<dbReference type="KEGG" id="ddi:DDB_G0272126"/>
<dbReference type="dictyBase" id="DDB_G0272126"/>
<dbReference type="VEuPathDB" id="AmoebaDB:DDB_G0272126"/>
<dbReference type="eggNOG" id="ENOG502RIAF">
    <property type="taxonomic scope" value="Eukaryota"/>
</dbReference>
<dbReference type="HOGENOM" id="CLU_2727531_0_0_1"/>
<dbReference type="InParanoid" id="Q86JE4"/>
<dbReference type="OMA" id="FITRYAY"/>
<dbReference type="PRO" id="PR:Q86JE4"/>
<dbReference type="Proteomes" id="UP000002195">
    <property type="component" value="Chromosome 2"/>
</dbReference>
<dbReference type="GO" id="GO:0016020">
    <property type="term" value="C:membrane"/>
    <property type="evidence" value="ECO:0007669"/>
    <property type="project" value="UniProtKB-SubCell"/>
</dbReference>
<reference key="1">
    <citation type="journal article" date="2002" name="Nature">
        <title>Sequence and analysis of chromosome 2 of Dictyostelium discoideum.</title>
        <authorList>
            <person name="Gloeckner G."/>
            <person name="Eichinger L."/>
            <person name="Szafranski K."/>
            <person name="Pachebat J.A."/>
            <person name="Bankier A.T."/>
            <person name="Dear P.H."/>
            <person name="Lehmann R."/>
            <person name="Baumgart C."/>
            <person name="Parra G."/>
            <person name="Abril J.F."/>
            <person name="Guigo R."/>
            <person name="Kumpf K."/>
            <person name="Tunggal B."/>
            <person name="Cox E.C."/>
            <person name="Quail M.A."/>
            <person name="Platzer M."/>
            <person name="Rosenthal A."/>
            <person name="Noegel A.A."/>
        </authorList>
    </citation>
    <scope>NUCLEOTIDE SEQUENCE [LARGE SCALE GENOMIC DNA]</scope>
    <source>
        <strain>AX4</strain>
    </source>
</reference>
<reference key="2">
    <citation type="journal article" date="2005" name="Nature">
        <title>The genome of the social amoeba Dictyostelium discoideum.</title>
        <authorList>
            <person name="Eichinger L."/>
            <person name="Pachebat J.A."/>
            <person name="Gloeckner G."/>
            <person name="Rajandream M.A."/>
            <person name="Sucgang R."/>
            <person name="Berriman M."/>
            <person name="Song J."/>
            <person name="Olsen R."/>
            <person name="Szafranski K."/>
            <person name="Xu Q."/>
            <person name="Tunggal B."/>
            <person name="Kummerfeld S."/>
            <person name="Madera M."/>
            <person name="Konfortov B.A."/>
            <person name="Rivero F."/>
            <person name="Bankier A.T."/>
            <person name="Lehmann R."/>
            <person name="Hamlin N."/>
            <person name="Davies R."/>
            <person name="Gaudet P."/>
            <person name="Fey P."/>
            <person name="Pilcher K."/>
            <person name="Chen G."/>
            <person name="Saunders D."/>
            <person name="Sodergren E.J."/>
            <person name="Davis P."/>
            <person name="Kerhornou A."/>
            <person name="Nie X."/>
            <person name="Hall N."/>
            <person name="Anjard C."/>
            <person name="Hemphill L."/>
            <person name="Bason N."/>
            <person name="Farbrother P."/>
            <person name="Desany B."/>
            <person name="Just E."/>
            <person name="Morio T."/>
            <person name="Rost R."/>
            <person name="Churcher C.M."/>
            <person name="Cooper J."/>
            <person name="Haydock S."/>
            <person name="van Driessche N."/>
            <person name="Cronin A."/>
            <person name="Goodhead I."/>
            <person name="Muzny D.M."/>
            <person name="Mourier T."/>
            <person name="Pain A."/>
            <person name="Lu M."/>
            <person name="Harper D."/>
            <person name="Lindsay R."/>
            <person name="Hauser H."/>
            <person name="James K.D."/>
            <person name="Quiles M."/>
            <person name="Madan Babu M."/>
            <person name="Saito T."/>
            <person name="Buchrieser C."/>
            <person name="Wardroper A."/>
            <person name="Felder M."/>
            <person name="Thangavelu M."/>
            <person name="Johnson D."/>
            <person name="Knights A."/>
            <person name="Loulseged H."/>
            <person name="Mungall K.L."/>
            <person name="Oliver K."/>
            <person name="Price C."/>
            <person name="Quail M.A."/>
            <person name="Urushihara H."/>
            <person name="Hernandez J."/>
            <person name="Rabbinowitsch E."/>
            <person name="Steffen D."/>
            <person name="Sanders M."/>
            <person name="Ma J."/>
            <person name="Kohara Y."/>
            <person name="Sharp S."/>
            <person name="Simmonds M.N."/>
            <person name="Spiegler S."/>
            <person name="Tivey A."/>
            <person name="Sugano S."/>
            <person name="White B."/>
            <person name="Walker D."/>
            <person name="Woodward J.R."/>
            <person name="Winckler T."/>
            <person name="Tanaka Y."/>
            <person name="Shaulsky G."/>
            <person name="Schleicher M."/>
            <person name="Weinstock G.M."/>
            <person name="Rosenthal A."/>
            <person name="Cox E.C."/>
            <person name="Chisholm R.L."/>
            <person name="Gibbs R.A."/>
            <person name="Loomis W.F."/>
            <person name="Platzer M."/>
            <person name="Kay R.R."/>
            <person name="Williams J.G."/>
            <person name="Dear P.H."/>
            <person name="Noegel A.A."/>
            <person name="Barrell B.G."/>
            <person name="Kuspa A."/>
        </authorList>
    </citation>
    <scope>NUCLEOTIDE SEQUENCE [LARGE SCALE GENOMIC DNA]</scope>
    <source>
        <strain>AX4</strain>
    </source>
</reference>
<protein>
    <recommendedName>
        <fullName>Putative transmembrane protein DDB_G0272126</fullName>
    </recommendedName>
</protein>
<comment type="subcellular location">
    <subcellularLocation>
        <location evidence="2">Membrane</location>
        <topology evidence="2">Multi-pass membrane protein</topology>
    </subcellularLocation>
</comment>
<proteinExistence type="predicted"/>
<gene>
    <name type="ORF">DDB_G0272126</name>
</gene>
<organism>
    <name type="scientific">Dictyostelium discoideum</name>
    <name type="common">Social amoeba</name>
    <dbReference type="NCBI Taxonomy" id="44689"/>
    <lineage>
        <taxon>Eukaryota</taxon>
        <taxon>Amoebozoa</taxon>
        <taxon>Evosea</taxon>
        <taxon>Eumycetozoa</taxon>
        <taxon>Dictyostelia</taxon>
        <taxon>Dictyosteliales</taxon>
        <taxon>Dictyosteliaceae</taxon>
        <taxon>Dictyostelium</taxon>
    </lineage>
</organism>
<evidence type="ECO:0000255" key="1"/>
<evidence type="ECO:0000305" key="2"/>
<sequence length="72" mass="8486">MTPYLKIIKSSYTLLSFFYFIANTIIRTIQNVPTSHKIILVSLYYLVFSLFITRIFYGSPLKIISTYIYGKF</sequence>
<keyword id="KW-0472">Membrane</keyword>
<keyword id="KW-1185">Reference proteome</keyword>
<keyword id="KW-0812">Transmembrane</keyword>
<keyword id="KW-1133">Transmembrane helix</keyword>
<name>Y8687_DICDI</name>
<feature type="chain" id="PRO_0000348167" description="Putative transmembrane protein DDB_G0272126">
    <location>
        <begin position="1"/>
        <end position="72"/>
    </location>
</feature>
<feature type="transmembrane region" description="Helical" evidence="1">
    <location>
        <begin position="6"/>
        <end position="26"/>
    </location>
</feature>
<feature type="transmembrane region" description="Helical" evidence="1">
    <location>
        <begin position="38"/>
        <end position="58"/>
    </location>
</feature>
<accession>Q86JE4</accession>
<accession>Q55A17</accession>